<accession>C1C7Q3</accession>
<gene>
    <name evidence="1" type="primary">carB</name>
    <name type="ordered locus">SP70585_1338</name>
</gene>
<protein>
    <recommendedName>
        <fullName evidence="1">Carbamoyl phosphate synthase large chain</fullName>
        <ecNumber evidence="1">6.3.4.16</ecNumber>
        <ecNumber evidence="1">6.3.5.5</ecNumber>
    </recommendedName>
    <alternativeName>
        <fullName evidence="1">Carbamoyl phosphate synthetase ammonia chain</fullName>
    </alternativeName>
</protein>
<reference key="1">
    <citation type="journal article" date="2010" name="Genome Biol.">
        <title>Structure and dynamics of the pan-genome of Streptococcus pneumoniae and closely related species.</title>
        <authorList>
            <person name="Donati C."/>
            <person name="Hiller N.L."/>
            <person name="Tettelin H."/>
            <person name="Muzzi A."/>
            <person name="Croucher N.J."/>
            <person name="Angiuoli S.V."/>
            <person name="Oggioni M."/>
            <person name="Dunning Hotopp J.C."/>
            <person name="Hu F.Z."/>
            <person name="Riley D.R."/>
            <person name="Covacci A."/>
            <person name="Mitchell T.J."/>
            <person name="Bentley S.D."/>
            <person name="Kilian M."/>
            <person name="Ehrlich G.D."/>
            <person name="Rappuoli R."/>
            <person name="Moxon E.R."/>
            <person name="Masignani V."/>
        </authorList>
    </citation>
    <scope>NUCLEOTIDE SEQUENCE [LARGE SCALE GENOMIC DNA]</scope>
    <source>
        <strain>70585</strain>
    </source>
</reference>
<sequence>MPKRTDIQKIMVIGSGPIIIGQAAEFDYAGTQACLSLKEEGYEVVLVNSNPATIMTDKEIADKVYIEPITLEFVTRILRKEGPDALLPTLGGQTGLNMAMELSKNGILDELGVELLGTKLSAIDQAEDRDLFKQLMEELEQPIPESEIVNTVEEAVAFAATIGYPVIVRPAFTLGGTGGGMCANEKELREITENGLKLSPVTQCLIERSIAGFKEIEYEVMRDSADNALVVCNMENFDPVGIHTGDSIVFAPAQTMSDYENQMLRDASLSIIRALKIEGGCNVQLALDPNSFKYYVIEVNPRVSRSSALASKATGYPIAKLAAKIAVGLTLDEVINPVTGSTYAMFEPALDYVVAKIPRFPFDKFEKGERRLGTQMKATGEVMAIGRNIEESLLKACRSLEIGVHHNEIPELAAVSDDALIEKVVKAQDDRLFYVSEAIRRGYTPEEIAELTKIDIFYLDKLLHIFEIEQELGAHPQDLEVLKTAKLNGFSDRKIAELWGTTDDQVRQLRLENKIVPVYKMVDTCAAEFDSETPYFYSTYGWENESIRSDKESVLVLGSGPIRIGQGVEFDYATVHSVKAIQAAGYEAIIMNSNPETVSTDFSVSDKLYFEPLTFEDVMNVIDLEQPKGVIVQFGGQTAINLAEPLAKAGVTILGTQVADLDRAEDRDLFEQALKELDIPQPPGQTATNEEEAALAARKIGFPVLVRPSYVLGGRAMEIVENEEDLRSYMRTAVKASPDHPVLVDSYIVGQECEVDAISDGKDVLIPGIMEHIERAGVHSGDSMAVYPPQTLSQKVQETIADYTKRLAIGLHCLGMMNIQFVIKDEKVYVIEVNPRASRTVPFLSKVTNIPMAQVATKLILGQSLSELGYQNGLYPESTRVHIKAPVFSFTKLAKVDSLLGPEMKSTGEVMGSDATLEKALYKAFEASYLHLPTFGNVVFTIADDAKEEALNLARRFQNIGYGILATEGTAAFFASHGLQAQPVGKIGDDDKDIPSFVRKGRIQAIINTVGTKRTADEDGEQIRRSAIEHGVPLFTALDTANAMLKVLESRSFVTEAI</sequence>
<evidence type="ECO:0000255" key="1">
    <source>
        <dbReference type="HAMAP-Rule" id="MF_01210"/>
    </source>
</evidence>
<comment type="function">
    <text evidence="1">Large subunit of the glutamine-dependent carbamoyl phosphate synthetase (CPSase). CPSase catalyzes the formation of carbamoyl phosphate from the ammonia moiety of glutamine, carbonate, and phosphate donated by ATP, constituting the first step of 2 biosynthetic pathways, one leading to arginine and/or urea and the other to pyrimidine nucleotides. The large subunit (synthetase) binds the substrates ammonia (free or transferred from glutamine from the small subunit), hydrogencarbonate and ATP and carries out an ATP-coupled ligase reaction, activating hydrogencarbonate by forming carboxy phosphate which reacts with ammonia to form carbamoyl phosphate.</text>
</comment>
<comment type="catalytic activity">
    <reaction evidence="1">
        <text>hydrogencarbonate + L-glutamine + 2 ATP + H2O = carbamoyl phosphate + L-glutamate + 2 ADP + phosphate + 2 H(+)</text>
        <dbReference type="Rhea" id="RHEA:18633"/>
        <dbReference type="ChEBI" id="CHEBI:15377"/>
        <dbReference type="ChEBI" id="CHEBI:15378"/>
        <dbReference type="ChEBI" id="CHEBI:17544"/>
        <dbReference type="ChEBI" id="CHEBI:29985"/>
        <dbReference type="ChEBI" id="CHEBI:30616"/>
        <dbReference type="ChEBI" id="CHEBI:43474"/>
        <dbReference type="ChEBI" id="CHEBI:58228"/>
        <dbReference type="ChEBI" id="CHEBI:58359"/>
        <dbReference type="ChEBI" id="CHEBI:456216"/>
        <dbReference type="EC" id="6.3.5.5"/>
    </reaction>
</comment>
<comment type="catalytic activity">
    <molecule>Carbamoyl phosphate synthase large chain</molecule>
    <reaction evidence="1">
        <text>hydrogencarbonate + NH4(+) + 2 ATP = carbamoyl phosphate + 2 ADP + phosphate + 2 H(+)</text>
        <dbReference type="Rhea" id="RHEA:18029"/>
        <dbReference type="ChEBI" id="CHEBI:15378"/>
        <dbReference type="ChEBI" id="CHEBI:17544"/>
        <dbReference type="ChEBI" id="CHEBI:28938"/>
        <dbReference type="ChEBI" id="CHEBI:30616"/>
        <dbReference type="ChEBI" id="CHEBI:43474"/>
        <dbReference type="ChEBI" id="CHEBI:58228"/>
        <dbReference type="ChEBI" id="CHEBI:456216"/>
        <dbReference type="EC" id="6.3.4.16"/>
    </reaction>
</comment>
<comment type="cofactor">
    <cofactor evidence="1">
        <name>Mg(2+)</name>
        <dbReference type="ChEBI" id="CHEBI:18420"/>
    </cofactor>
    <cofactor evidence="1">
        <name>Mn(2+)</name>
        <dbReference type="ChEBI" id="CHEBI:29035"/>
    </cofactor>
    <text evidence="1">Binds 4 Mg(2+) or Mn(2+) ions per subunit.</text>
</comment>
<comment type="pathway">
    <text evidence="1">Amino-acid biosynthesis; L-arginine biosynthesis; carbamoyl phosphate from bicarbonate: step 1/1.</text>
</comment>
<comment type="pathway">
    <text evidence="1">Pyrimidine metabolism; UMP biosynthesis via de novo pathway; (S)-dihydroorotate from bicarbonate: step 1/3.</text>
</comment>
<comment type="subunit">
    <text evidence="1">Composed of two chains; the small (or glutamine) chain promotes the hydrolysis of glutamine to ammonia, which is used by the large (or ammonia) chain to synthesize carbamoyl phosphate. Tetramer of heterodimers (alpha,beta)4.</text>
</comment>
<comment type="domain">
    <text evidence="1">The large subunit is composed of 2 ATP-grasp domains that are involved in binding the 2 ATP molecules needed for carbamoyl phosphate synthesis. The N-terminal ATP-grasp domain (referred to as the carboxyphosphate synthetic component) catalyzes the ATP-dependent phosphorylation of hydrogencarbonate to carboxyphosphate and the subsequent nucleophilic attack by ammonia to form a carbamate intermediate. The C-terminal ATP-grasp domain (referred to as the carbamoyl phosphate synthetic component) then catalyzes the phosphorylation of carbamate with the second ATP to form the end product carbamoyl phosphate. The reactive and unstable enzyme intermediates are sequentially channeled from one active site to the next through the interior of the protein over a distance of at least 96 A.</text>
</comment>
<comment type="similarity">
    <text evidence="1">Belongs to the CarB family.</text>
</comment>
<name>CARB_STRP7</name>
<keyword id="KW-0028">Amino-acid biosynthesis</keyword>
<keyword id="KW-0055">Arginine biosynthesis</keyword>
<keyword id="KW-0067">ATP-binding</keyword>
<keyword id="KW-0436">Ligase</keyword>
<keyword id="KW-0460">Magnesium</keyword>
<keyword id="KW-0464">Manganese</keyword>
<keyword id="KW-0479">Metal-binding</keyword>
<keyword id="KW-0547">Nucleotide-binding</keyword>
<keyword id="KW-0665">Pyrimidine biosynthesis</keyword>
<keyword id="KW-0677">Repeat</keyword>
<organism>
    <name type="scientific">Streptococcus pneumoniae (strain 70585)</name>
    <dbReference type="NCBI Taxonomy" id="488221"/>
    <lineage>
        <taxon>Bacteria</taxon>
        <taxon>Bacillati</taxon>
        <taxon>Bacillota</taxon>
        <taxon>Bacilli</taxon>
        <taxon>Lactobacillales</taxon>
        <taxon>Streptococcaceae</taxon>
        <taxon>Streptococcus</taxon>
    </lineage>
</organism>
<proteinExistence type="inferred from homology"/>
<feature type="chain" id="PRO_1000164716" description="Carbamoyl phosphate synthase large chain">
    <location>
        <begin position="1"/>
        <end position="1058"/>
    </location>
</feature>
<feature type="domain" description="ATP-grasp 1" evidence="1">
    <location>
        <begin position="133"/>
        <end position="327"/>
    </location>
</feature>
<feature type="domain" description="ATP-grasp 2" evidence="1">
    <location>
        <begin position="671"/>
        <end position="861"/>
    </location>
</feature>
<feature type="domain" description="MGS-like" evidence="1">
    <location>
        <begin position="930"/>
        <end position="1058"/>
    </location>
</feature>
<feature type="region of interest" description="Carboxyphosphate synthetic domain" evidence="1">
    <location>
        <begin position="1"/>
        <end position="401"/>
    </location>
</feature>
<feature type="region of interest" description="Oligomerization domain" evidence="1">
    <location>
        <begin position="402"/>
        <end position="546"/>
    </location>
</feature>
<feature type="region of interest" description="Carbamoyl phosphate synthetic domain" evidence="1">
    <location>
        <begin position="547"/>
        <end position="929"/>
    </location>
</feature>
<feature type="region of interest" description="Allosteric domain" evidence="1">
    <location>
        <begin position="930"/>
        <end position="1058"/>
    </location>
</feature>
<feature type="binding site" evidence="1">
    <location>
        <position position="129"/>
    </location>
    <ligand>
        <name>ATP</name>
        <dbReference type="ChEBI" id="CHEBI:30616"/>
        <label>1</label>
    </ligand>
</feature>
<feature type="binding site" evidence="1">
    <location>
        <position position="169"/>
    </location>
    <ligand>
        <name>ATP</name>
        <dbReference type="ChEBI" id="CHEBI:30616"/>
        <label>1</label>
    </ligand>
</feature>
<feature type="binding site" evidence="1">
    <location>
        <position position="175"/>
    </location>
    <ligand>
        <name>ATP</name>
        <dbReference type="ChEBI" id="CHEBI:30616"/>
        <label>1</label>
    </ligand>
</feature>
<feature type="binding site" evidence="1">
    <location>
        <position position="176"/>
    </location>
    <ligand>
        <name>ATP</name>
        <dbReference type="ChEBI" id="CHEBI:30616"/>
        <label>1</label>
    </ligand>
</feature>
<feature type="binding site" evidence="1">
    <location>
        <position position="208"/>
    </location>
    <ligand>
        <name>ATP</name>
        <dbReference type="ChEBI" id="CHEBI:30616"/>
        <label>1</label>
    </ligand>
</feature>
<feature type="binding site" evidence="1">
    <location>
        <position position="210"/>
    </location>
    <ligand>
        <name>ATP</name>
        <dbReference type="ChEBI" id="CHEBI:30616"/>
        <label>1</label>
    </ligand>
</feature>
<feature type="binding site" evidence="1">
    <location>
        <position position="215"/>
    </location>
    <ligand>
        <name>ATP</name>
        <dbReference type="ChEBI" id="CHEBI:30616"/>
        <label>1</label>
    </ligand>
</feature>
<feature type="binding site" evidence="1">
    <location>
        <position position="241"/>
    </location>
    <ligand>
        <name>ATP</name>
        <dbReference type="ChEBI" id="CHEBI:30616"/>
        <label>1</label>
    </ligand>
</feature>
<feature type="binding site" evidence="1">
    <location>
        <position position="242"/>
    </location>
    <ligand>
        <name>ATP</name>
        <dbReference type="ChEBI" id="CHEBI:30616"/>
        <label>1</label>
    </ligand>
</feature>
<feature type="binding site" evidence="1">
    <location>
        <position position="243"/>
    </location>
    <ligand>
        <name>ATP</name>
        <dbReference type="ChEBI" id="CHEBI:30616"/>
        <label>1</label>
    </ligand>
</feature>
<feature type="binding site" evidence="1">
    <location>
        <position position="284"/>
    </location>
    <ligand>
        <name>ATP</name>
        <dbReference type="ChEBI" id="CHEBI:30616"/>
        <label>1</label>
    </ligand>
</feature>
<feature type="binding site" evidence="1">
    <location>
        <position position="284"/>
    </location>
    <ligand>
        <name>Mg(2+)</name>
        <dbReference type="ChEBI" id="CHEBI:18420"/>
        <label>1</label>
    </ligand>
</feature>
<feature type="binding site" evidence="1">
    <location>
        <position position="284"/>
    </location>
    <ligand>
        <name>Mn(2+)</name>
        <dbReference type="ChEBI" id="CHEBI:29035"/>
        <label>1</label>
    </ligand>
</feature>
<feature type="binding site" evidence="1">
    <location>
        <position position="298"/>
    </location>
    <ligand>
        <name>ATP</name>
        <dbReference type="ChEBI" id="CHEBI:30616"/>
        <label>1</label>
    </ligand>
</feature>
<feature type="binding site" evidence="1">
    <location>
        <position position="298"/>
    </location>
    <ligand>
        <name>Mg(2+)</name>
        <dbReference type="ChEBI" id="CHEBI:18420"/>
        <label>1</label>
    </ligand>
</feature>
<feature type="binding site" evidence="1">
    <location>
        <position position="298"/>
    </location>
    <ligand>
        <name>Mg(2+)</name>
        <dbReference type="ChEBI" id="CHEBI:18420"/>
        <label>2</label>
    </ligand>
</feature>
<feature type="binding site" evidence="1">
    <location>
        <position position="298"/>
    </location>
    <ligand>
        <name>Mn(2+)</name>
        <dbReference type="ChEBI" id="CHEBI:29035"/>
        <label>1</label>
    </ligand>
</feature>
<feature type="binding site" evidence="1">
    <location>
        <position position="298"/>
    </location>
    <ligand>
        <name>Mn(2+)</name>
        <dbReference type="ChEBI" id="CHEBI:29035"/>
        <label>2</label>
    </ligand>
</feature>
<feature type="binding site" evidence="1">
    <location>
        <position position="300"/>
    </location>
    <ligand>
        <name>Mg(2+)</name>
        <dbReference type="ChEBI" id="CHEBI:18420"/>
        <label>2</label>
    </ligand>
</feature>
<feature type="binding site" evidence="1">
    <location>
        <position position="300"/>
    </location>
    <ligand>
        <name>Mn(2+)</name>
        <dbReference type="ChEBI" id="CHEBI:29035"/>
        <label>2</label>
    </ligand>
</feature>
<feature type="binding site" evidence="1">
    <location>
        <position position="707"/>
    </location>
    <ligand>
        <name>ATP</name>
        <dbReference type="ChEBI" id="CHEBI:30616"/>
        <label>2</label>
    </ligand>
</feature>
<feature type="binding site" evidence="1">
    <location>
        <position position="746"/>
    </location>
    <ligand>
        <name>ATP</name>
        <dbReference type="ChEBI" id="CHEBI:30616"/>
        <label>2</label>
    </ligand>
</feature>
<feature type="binding site" evidence="1">
    <location>
        <position position="748"/>
    </location>
    <ligand>
        <name>ATP</name>
        <dbReference type="ChEBI" id="CHEBI:30616"/>
        <label>2</label>
    </ligand>
</feature>
<feature type="binding site" evidence="1">
    <location>
        <position position="752"/>
    </location>
    <ligand>
        <name>ATP</name>
        <dbReference type="ChEBI" id="CHEBI:30616"/>
        <label>2</label>
    </ligand>
</feature>
<feature type="binding site" evidence="1">
    <location>
        <position position="777"/>
    </location>
    <ligand>
        <name>ATP</name>
        <dbReference type="ChEBI" id="CHEBI:30616"/>
        <label>2</label>
    </ligand>
</feature>
<feature type="binding site" evidence="1">
    <location>
        <position position="778"/>
    </location>
    <ligand>
        <name>ATP</name>
        <dbReference type="ChEBI" id="CHEBI:30616"/>
        <label>2</label>
    </ligand>
</feature>
<feature type="binding site" evidence="1">
    <location>
        <position position="779"/>
    </location>
    <ligand>
        <name>ATP</name>
        <dbReference type="ChEBI" id="CHEBI:30616"/>
        <label>2</label>
    </ligand>
</feature>
<feature type="binding site" evidence="1">
    <location>
        <position position="780"/>
    </location>
    <ligand>
        <name>ATP</name>
        <dbReference type="ChEBI" id="CHEBI:30616"/>
        <label>2</label>
    </ligand>
</feature>
<feature type="binding site" evidence="1">
    <location>
        <position position="820"/>
    </location>
    <ligand>
        <name>ATP</name>
        <dbReference type="ChEBI" id="CHEBI:30616"/>
        <label>2</label>
    </ligand>
</feature>
<feature type="binding site" evidence="1">
    <location>
        <position position="820"/>
    </location>
    <ligand>
        <name>Mg(2+)</name>
        <dbReference type="ChEBI" id="CHEBI:18420"/>
        <label>3</label>
    </ligand>
</feature>
<feature type="binding site" evidence="1">
    <location>
        <position position="820"/>
    </location>
    <ligand>
        <name>Mn(2+)</name>
        <dbReference type="ChEBI" id="CHEBI:29035"/>
        <label>3</label>
    </ligand>
</feature>
<feature type="binding site" evidence="1">
    <location>
        <position position="832"/>
    </location>
    <ligand>
        <name>ATP</name>
        <dbReference type="ChEBI" id="CHEBI:30616"/>
        <label>2</label>
    </ligand>
</feature>
<feature type="binding site" evidence="1">
    <location>
        <position position="832"/>
    </location>
    <ligand>
        <name>Mg(2+)</name>
        <dbReference type="ChEBI" id="CHEBI:18420"/>
        <label>3</label>
    </ligand>
</feature>
<feature type="binding site" evidence="1">
    <location>
        <position position="832"/>
    </location>
    <ligand>
        <name>Mg(2+)</name>
        <dbReference type="ChEBI" id="CHEBI:18420"/>
        <label>4</label>
    </ligand>
</feature>
<feature type="binding site" evidence="1">
    <location>
        <position position="832"/>
    </location>
    <ligand>
        <name>Mn(2+)</name>
        <dbReference type="ChEBI" id="CHEBI:29035"/>
        <label>3</label>
    </ligand>
</feature>
<feature type="binding site" evidence="1">
    <location>
        <position position="832"/>
    </location>
    <ligand>
        <name>Mn(2+)</name>
        <dbReference type="ChEBI" id="CHEBI:29035"/>
        <label>4</label>
    </ligand>
</feature>
<feature type="binding site" evidence="1">
    <location>
        <position position="834"/>
    </location>
    <ligand>
        <name>Mg(2+)</name>
        <dbReference type="ChEBI" id="CHEBI:18420"/>
        <label>4</label>
    </ligand>
</feature>
<feature type="binding site" evidence="1">
    <location>
        <position position="834"/>
    </location>
    <ligand>
        <name>Mn(2+)</name>
        <dbReference type="ChEBI" id="CHEBI:29035"/>
        <label>4</label>
    </ligand>
</feature>
<dbReference type="EC" id="6.3.4.16" evidence="1"/>
<dbReference type="EC" id="6.3.5.5" evidence="1"/>
<dbReference type="EMBL" id="CP000918">
    <property type="protein sequence ID" value="ACO17720.1"/>
    <property type="molecule type" value="Genomic_DNA"/>
</dbReference>
<dbReference type="RefSeq" id="WP_001126407.1">
    <property type="nucleotide sequence ID" value="NC_012468.1"/>
</dbReference>
<dbReference type="SMR" id="C1C7Q3"/>
<dbReference type="KEGG" id="snm:SP70585_1338"/>
<dbReference type="HOGENOM" id="CLU_000513_1_2_9"/>
<dbReference type="UniPathway" id="UPA00068">
    <property type="reaction ID" value="UER00171"/>
</dbReference>
<dbReference type="UniPathway" id="UPA00070">
    <property type="reaction ID" value="UER00115"/>
</dbReference>
<dbReference type="Proteomes" id="UP000002211">
    <property type="component" value="Chromosome"/>
</dbReference>
<dbReference type="GO" id="GO:0005737">
    <property type="term" value="C:cytoplasm"/>
    <property type="evidence" value="ECO:0007669"/>
    <property type="project" value="TreeGrafter"/>
</dbReference>
<dbReference type="GO" id="GO:0005524">
    <property type="term" value="F:ATP binding"/>
    <property type="evidence" value="ECO:0007669"/>
    <property type="project" value="UniProtKB-UniRule"/>
</dbReference>
<dbReference type="GO" id="GO:0004087">
    <property type="term" value="F:carbamoyl-phosphate synthase (ammonia) activity"/>
    <property type="evidence" value="ECO:0007669"/>
    <property type="project" value="RHEA"/>
</dbReference>
<dbReference type="GO" id="GO:0004088">
    <property type="term" value="F:carbamoyl-phosphate synthase (glutamine-hydrolyzing) activity"/>
    <property type="evidence" value="ECO:0007669"/>
    <property type="project" value="UniProtKB-UniRule"/>
</dbReference>
<dbReference type="GO" id="GO:0046872">
    <property type="term" value="F:metal ion binding"/>
    <property type="evidence" value="ECO:0007669"/>
    <property type="project" value="UniProtKB-KW"/>
</dbReference>
<dbReference type="GO" id="GO:0044205">
    <property type="term" value="P:'de novo' UMP biosynthetic process"/>
    <property type="evidence" value="ECO:0007669"/>
    <property type="project" value="UniProtKB-UniRule"/>
</dbReference>
<dbReference type="GO" id="GO:0006541">
    <property type="term" value="P:glutamine metabolic process"/>
    <property type="evidence" value="ECO:0007669"/>
    <property type="project" value="TreeGrafter"/>
</dbReference>
<dbReference type="GO" id="GO:0006526">
    <property type="term" value="P:L-arginine biosynthetic process"/>
    <property type="evidence" value="ECO:0007669"/>
    <property type="project" value="UniProtKB-UniRule"/>
</dbReference>
<dbReference type="CDD" id="cd01424">
    <property type="entry name" value="MGS_CPS_II"/>
    <property type="match status" value="1"/>
</dbReference>
<dbReference type="FunFam" id="1.10.1030.10:FF:000002">
    <property type="entry name" value="Carbamoyl-phosphate synthase large chain"/>
    <property type="match status" value="1"/>
</dbReference>
<dbReference type="FunFam" id="3.30.1490.20:FF:000001">
    <property type="entry name" value="Carbamoyl-phosphate synthase large chain"/>
    <property type="match status" value="1"/>
</dbReference>
<dbReference type="FunFam" id="3.30.470.20:FF:000001">
    <property type="entry name" value="Carbamoyl-phosphate synthase large chain"/>
    <property type="match status" value="1"/>
</dbReference>
<dbReference type="FunFam" id="3.30.470.20:FF:000026">
    <property type="entry name" value="Carbamoyl-phosphate synthase large chain"/>
    <property type="match status" value="1"/>
</dbReference>
<dbReference type="FunFam" id="3.40.50.1380:FF:000017">
    <property type="entry name" value="Carbamoyl-phosphate synthase large chain"/>
    <property type="match status" value="1"/>
</dbReference>
<dbReference type="FunFam" id="3.40.50.20:FF:000001">
    <property type="entry name" value="Carbamoyl-phosphate synthase large chain"/>
    <property type="match status" value="2"/>
</dbReference>
<dbReference type="Gene3D" id="3.40.50.20">
    <property type="match status" value="2"/>
</dbReference>
<dbReference type="Gene3D" id="3.30.1490.20">
    <property type="entry name" value="ATP-grasp fold, A domain"/>
    <property type="match status" value="1"/>
</dbReference>
<dbReference type="Gene3D" id="3.30.470.20">
    <property type="entry name" value="ATP-grasp fold, B domain"/>
    <property type="match status" value="2"/>
</dbReference>
<dbReference type="Gene3D" id="1.10.1030.10">
    <property type="entry name" value="Carbamoyl-phosphate synthetase, large subunit oligomerisation domain"/>
    <property type="match status" value="1"/>
</dbReference>
<dbReference type="Gene3D" id="3.40.50.1380">
    <property type="entry name" value="Methylglyoxal synthase-like domain"/>
    <property type="match status" value="1"/>
</dbReference>
<dbReference type="HAMAP" id="MF_01210_B">
    <property type="entry name" value="CPSase_L_chain_B"/>
    <property type="match status" value="1"/>
</dbReference>
<dbReference type="InterPro" id="IPR011761">
    <property type="entry name" value="ATP-grasp"/>
</dbReference>
<dbReference type="InterPro" id="IPR013815">
    <property type="entry name" value="ATP_grasp_subdomain_1"/>
</dbReference>
<dbReference type="InterPro" id="IPR006275">
    <property type="entry name" value="CarbamoylP_synth_lsu"/>
</dbReference>
<dbReference type="InterPro" id="IPR005480">
    <property type="entry name" value="CarbamoylP_synth_lsu_oligo"/>
</dbReference>
<dbReference type="InterPro" id="IPR036897">
    <property type="entry name" value="CarbamoylP_synth_lsu_oligo_sf"/>
</dbReference>
<dbReference type="InterPro" id="IPR005479">
    <property type="entry name" value="CbamoylP_synth_lsu-like_ATP-bd"/>
</dbReference>
<dbReference type="InterPro" id="IPR005483">
    <property type="entry name" value="CbamoylP_synth_lsu_CPSase_dom"/>
</dbReference>
<dbReference type="InterPro" id="IPR011607">
    <property type="entry name" value="MGS-like_dom"/>
</dbReference>
<dbReference type="InterPro" id="IPR036914">
    <property type="entry name" value="MGS-like_dom_sf"/>
</dbReference>
<dbReference type="InterPro" id="IPR033937">
    <property type="entry name" value="MGS_CPS_CarB"/>
</dbReference>
<dbReference type="InterPro" id="IPR016185">
    <property type="entry name" value="PreATP-grasp_dom_sf"/>
</dbReference>
<dbReference type="NCBIfam" id="TIGR01369">
    <property type="entry name" value="CPSaseII_lrg"/>
    <property type="match status" value="1"/>
</dbReference>
<dbReference type="NCBIfam" id="NF003671">
    <property type="entry name" value="PRK05294.1"/>
    <property type="match status" value="1"/>
</dbReference>
<dbReference type="NCBIfam" id="NF009455">
    <property type="entry name" value="PRK12815.1"/>
    <property type="match status" value="1"/>
</dbReference>
<dbReference type="PANTHER" id="PTHR11405:SF53">
    <property type="entry name" value="CARBAMOYL-PHOSPHATE SYNTHASE [AMMONIA], MITOCHONDRIAL"/>
    <property type="match status" value="1"/>
</dbReference>
<dbReference type="PANTHER" id="PTHR11405">
    <property type="entry name" value="CARBAMOYLTRANSFERASE FAMILY MEMBER"/>
    <property type="match status" value="1"/>
</dbReference>
<dbReference type="Pfam" id="PF02786">
    <property type="entry name" value="CPSase_L_D2"/>
    <property type="match status" value="2"/>
</dbReference>
<dbReference type="Pfam" id="PF02787">
    <property type="entry name" value="CPSase_L_D3"/>
    <property type="match status" value="1"/>
</dbReference>
<dbReference type="Pfam" id="PF02142">
    <property type="entry name" value="MGS"/>
    <property type="match status" value="1"/>
</dbReference>
<dbReference type="PRINTS" id="PR00098">
    <property type="entry name" value="CPSASE"/>
</dbReference>
<dbReference type="SMART" id="SM01096">
    <property type="entry name" value="CPSase_L_D3"/>
    <property type="match status" value="1"/>
</dbReference>
<dbReference type="SMART" id="SM01209">
    <property type="entry name" value="GARS_A"/>
    <property type="match status" value="1"/>
</dbReference>
<dbReference type="SMART" id="SM00851">
    <property type="entry name" value="MGS"/>
    <property type="match status" value="1"/>
</dbReference>
<dbReference type="SUPFAM" id="SSF48108">
    <property type="entry name" value="Carbamoyl phosphate synthetase, large subunit connection domain"/>
    <property type="match status" value="1"/>
</dbReference>
<dbReference type="SUPFAM" id="SSF56059">
    <property type="entry name" value="Glutathione synthetase ATP-binding domain-like"/>
    <property type="match status" value="2"/>
</dbReference>
<dbReference type="SUPFAM" id="SSF52335">
    <property type="entry name" value="Methylglyoxal synthase-like"/>
    <property type="match status" value="1"/>
</dbReference>
<dbReference type="SUPFAM" id="SSF52440">
    <property type="entry name" value="PreATP-grasp domain"/>
    <property type="match status" value="2"/>
</dbReference>
<dbReference type="PROSITE" id="PS50975">
    <property type="entry name" value="ATP_GRASP"/>
    <property type="match status" value="2"/>
</dbReference>
<dbReference type="PROSITE" id="PS00866">
    <property type="entry name" value="CPSASE_1"/>
    <property type="match status" value="2"/>
</dbReference>
<dbReference type="PROSITE" id="PS00867">
    <property type="entry name" value="CPSASE_2"/>
    <property type="match status" value="2"/>
</dbReference>
<dbReference type="PROSITE" id="PS51855">
    <property type="entry name" value="MGS"/>
    <property type="match status" value="1"/>
</dbReference>